<comment type="function">
    <text evidence="1">Catalyzes the condensation of carbamoyl phosphate and aspartate to form carbamoyl aspartate and inorganic phosphate, the committed step in the de novo pyrimidine nucleotide biosynthesis pathway.</text>
</comment>
<comment type="catalytic activity">
    <reaction evidence="1">
        <text>carbamoyl phosphate + L-aspartate = N-carbamoyl-L-aspartate + phosphate + H(+)</text>
        <dbReference type="Rhea" id="RHEA:20013"/>
        <dbReference type="ChEBI" id="CHEBI:15378"/>
        <dbReference type="ChEBI" id="CHEBI:29991"/>
        <dbReference type="ChEBI" id="CHEBI:32814"/>
        <dbReference type="ChEBI" id="CHEBI:43474"/>
        <dbReference type="ChEBI" id="CHEBI:58228"/>
        <dbReference type="EC" id="2.1.3.2"/>
    </reaction>
</comment>
<comment type="pathway">
    <text evidence="1">Pyrimidine metabolism; UMP biosynthesis via de novo pathway; (S)-dihydroorotate from bicarbonate: step 2/3.</text>
</comment>
<comment type="subunit">
    <text evidence="1">Heterododecamer (2C3:3R2) of six catalytic PyrB chains organized as two trimers (C3), and six regulatory PyrI chains organized as three dimers (R2).</text>
</comment>
<comment type="similarity">
    <text evidence="1">Belongs to the aspartate/ornithine carbamoyltransferase superfamily. ATCase family.</text>
</comment>
<gene>
    <name evidence="1" type="primary">pyrB</name>
    <name type="ordered locus">DehaBAV1_1009</name>
</gene>
<evidence type="ECO:0000255" key="1">
    <source>
        <dbReference type="HAMAP-Rule" id="MF_00001"/>
    </source>
</evidence>
<feature type="chain" id="PRO_1000073727" description="Aspartate carbamoyltransferase catalytic subunit">
    <location>
        <begin position="1"/>
        <end position="331"/>
    </location>
</feature>
<feature type="binding site" evidence="1">
    <location>
        <position position="76"/>
    </location>
    <ligand>
        <name>carbamoyl phosphate</name>
        <dbReference type="ChEBI" id="CHEBI:58228"/>
    </ligand>
</feature>
<feature type="binding site" evidence="1">
    <location>
        <position position="77"/>
    </location>
    <ligand>
        <name>carbamoyl phosphate</name>
        <dbReference type="ChEBI" id="CHEBI:58228"/>
    </ligand>
</feature>
<feature type="binding site" evidence="1">
    <location>
        <position position="104"/>
    </location>
    <ligand>
        <name>L-aspartate</name>
        <dbReference type="ChEBI" id="CHEBI:29991"/>
    </ligand>
</feature>
<feature type="binding site" evidence="1">
    <location>
        <position position="126"/>
    </location>
    <ligand>
        <name>carbamoyl phosphate</name>
        <dbReference type="ChEBI" id="CHEBI:58228"/>
    </ligand>
</feature>
<feature type="binding site" evidence="1">
    <location>
        <position position="154"/>
    </location>
    <ligand>
        <name>carbamoyl phosphate</name>
        <dbReference type="ChEBI" id="CHEBI:58228"/>
    </ligand>
</feature>
<feature type="binding site" evidence="1">
    <location>
        <position position="157"/>
    </location>
    <ligand>
        <name>carbamoyl phosphate</name>
        <dbReference type="ChEBI" id="CHEBI:58228"/>
    </ligand>
</feature>
<feature type="binding site" evidence="1">
    <location>
        <position position="187"/>
    </location>
    <ligand>
        <name>L-aspartate</name>
        <dbReference type="ChEBI" id="CHEBI:29991"/>
    </ligand>
</feature>
<feature type="binding site" evidence="1">
    <location>
        <position position="246"/>
    </location>
    <ligand>
        <name>L-aspartate</name>
        <dbReference type="ChEBI" id="CHEBI:29991"/>
    </ligand>
</feature>
<feature type="binding site" evidence="1">
    <location>
        <position position="287"/>
    </location>
    <ligand>
        <name>carbamoyl phosphate</name>
        <dbReference type="ChEBI" id="CHEBI:58228"/>
    </ligand>
</feature>
<feature type="binding site" evidence="1">
    <location>
        <position position="288"/>
    </location>
    <ligand>
        <name>carbamoyl phosphate</name>
        <dbReference type="ChEBI" id="CHEBI:58228"/>
    </ligand>
</feature>
<protein>
    <recommendedName>
        <fullName evidence="1">Aspartate carbamoyltransferase catalytic subunit</fullName>
        <ecNumber evidence="1">2.1.3.2</ecNumber>
    </recommendedName>
    <alternativeName>
        <fullName evidence="1">Aspartate transcarbamylase</fullName>
        <shortName evidence="1">ATCase</shortName>
    </alternativeName>
</protein>
<keyword id="KW-0665">Pyrimidine biosynthesis</keyword>
<keyword id="KW-0808">Transferase</keyword>
<organism>
    <name type="scientific">Dehalococcoides mccartyi (strain ATCC BAA-2100 / JCM 16839 / KCTC 5957 / BAV1)</name>
    <dbReference type="NCBI Taxonomy" id="216389"/>
    <lineage>
        <taxon>Bacteria</taxon>
        <taxon>Bacillati</taxon>
        <taxon>Chloroflexota</taxon>
        <taxon>Dehalococcoidia</taxon>
        <taxon>Dehalococcoidales</taxon>
        <taxon>Dehalococcoidaceae</taxon>
        <taxon>Dehalococcoides</taxon>
    </lineage>
</organism>
<accession>A5FQE1</accession>
<name>PYRB_DEHMB</name>
<proteinExistence type="inferred from homology"/>
<reference key="1">
    <citation type="submission" date="2007-05" db="EMBL/GenBank/DDBJ databases">
        <title>Complete sequence of Dehalococcoides sp. BAV1.</title>
        <authorList>
            <consortium name="US DOE Joint Genome Institute"/>
            <person name="Copeland A."/>
            <person name="Lucas S."/>
            <person name="Lapidus A."/>
            <person name="Barry K."/>
            <person name="Detter J.C."/>
            <person name="Glavina del Rio T."/>
            <person name="Hammon N."/>
            <person name="Israni S."/>
            <person name="Pitluck S."/>
            <person name="Lowry S."/>
            <person name="Clum A."/>
            <person name="Schmutz J."/>
            <person name="Larimer F."/>
            <person name="Land M."/>
            <person name="Hauser L."/>
            <person name="Kyrpides N."/>
            <person name="Kim E."/>
            <person name="Ritalahti K.M."/>
            <person name="Loeffler F."/>
            <person name="Richardson P."/>
        </authorList>
    </citation>
    <scope>NUCLEOTIDE SEQUENCE [LARGE SCALE GENOMIC DNA]</scope>
    <source>
        <strain>ATCC BAA-2100 / JCM 16839 / KCTC 5957 / BAV1</strain>
    </source>
</reference>
<sequence>MTHIPKTPADTETLLSEVQGWKHRHVLDLDNFSREELDMVMQTAGVMLDILSRPVKKVPALKGKTIATLFYEPSTRTRSSFELAAKSLSADVLNLNVSQSSISKGESLLDTLDTLESLGADMVVMRHPLSGAPYLAANNCHANIINAGDGWHAHPSQALLDIFTILRHKSSLEGLKITLIGDIKHSRVAHSNIWGLSKMGAKITLCAPYTLLPEGLNTNSKIFPEVTLETDIKQAVSGADVVMGLRLQRERQQSGLLPGIREYARYFQLNEEILKLAKSNALVMHPGPVNEDIELSQSVVHGEQSVIKEQVKNGVAVRMALFYLCSGSKEI</sequence>
<dbReference type="EC" id="2.1.3.2" evidence="1"/>
<dbReference type="EMBL" id="CP000688">
    <property type="protein sequence ID" value="ABQ17589.1"/>
    <property type="molecule type" value="Genomic_DNA"/>
</dbReference>
<dbReference type="SMR" id="A5FQE1"/>
<dbReference type="KEGG" id="deb:DehaBAV1_1009"/>
<dbReference type="PATRIC" id="fig|216389.18.peg.1064"/>
<dbReference type="HOGENOM" id="CLU_043846_2_0_0"/>
<dbReference type="UniPathway" id="UPA00070">
    <property type="reaction ID" value="UER00116"/>
</dbReference>
<dbReference type="GO" id="GO:0005829">
    <property type="term" value="C:cytosol"/>
    <property type="evidence" value="ECO:0007669"/>
    <property type="project" value="TreeGrafter"/>
</dbReference>
<dbReference type="GO" id="GO:0016597">
    <property type="term" value="F:amino acid binding"/>
    <property type="evidence" value="ECO:0007669"/>
    <property type="project" value="InterPro"/>
</dbReference>
<dbReference type="GO" id="GO:0004070">
    <property type="term" value="F:aspartate carbamoyltransferase activity"/>
    <property type="evidence" value="ECO:0007669"/>
    <property type="project" value="UniProtKB-UniRule"/>
</dbReference>
<dbReference type="GO" id="GO:0006207">
    <property type="term" value="P:'de novo' pyrimidine nucleobase biosynthetic process"/>
    <property type="evidence" value="ECO:0007669"/>
    <property type="project" value="InterPro"/>
</dbReference>
<dbReference type="GO" id="GO:0044205">
    <property type="term" value="P:'de novo' UMP biosynthetic process"/>
    <property type="evidence" value="ECO:0007669"/>
    <property type="project" value="UniProtKB-UniRule"/>
</dbReference>
<dbReference type="GO" id="GO:0006520">
    <property type="term" value="P:amino acid metabolic process"/>
    <property type="evidence" value="ECO:0007669"/>
    <property type="project" value="InterPro"/>
</dbReference>
<dbReference type="Gene3D" id="3.40.50.1370">
    <property type="entry name" value="Aspartate/ornithine carbamoyltransferase"/>
    <property type="match status" value="2"/>
</dbReference>
<dbReference type="HAMAP" id="MF_00001">
    <property type="entry name" value="Asp_carb_tr"/>
    <property type="match status" value="1"/>
</dbReference>
<dbReference type="InterPro" id="IPR006132">
    <property type="entry name" value="Asp/Orn_carbamoyltranf_P-bd"/>
</dbReference>
<dbReference type="InterPro" id="IPR006130">
    <property type="entry name" value="Asp/Orn_carbamoylTrfase"/>
</dbReference>
<dbReference type="InterPro" id="IPR036901">
    <property type="entry name" value="Asp/Orn_carbamoylTrfase_sf"/>
</dbReference>
<dbReference type="InterPro" id="IPR002082">
    <property type="entry name" value="Asp_carbamoyltransf"/>
</dbReference>
<dbReference type="InterPro" id="IPR006131">
    <property type="entry name" value="Asp_carbamoyltransf_Asp/Orn-bd"/>
</dbReference>
<dbReference type="NCBIfam" id="TIGR00670">
    <property type="entry name" value="asp_carb_tr"/>
    <property type="match status" value="1"/>
</dbReference>
<dbReference type="NCBIfam" id="NF002032">
    <property type="entry name" value="PRK00856.1"/>
    <property type="match status" value="1"/>
</dbReference>
<dbReference type="PANTHER" id="PTHR45753:SF6">
    <property type="entry name" value="ASPARTATE CARBAMOYLTRANSFERASE"/>
    <property type="match status" value="1"/>
</dbReference>
<dbReference type="PANTHER" id="PTHR45753">
    <property type="entry name" value="ORNITHINE CARBAMOYLTRANSFERASE, MITOCHONDRIAL"/>
    <property type="match status" value="1"/>
</dbReference>
<dbReference type="Pfam" id="PF00185">
    <property type="entry name" value="OTCace"/>
    <property type="match status" value="1"/>
</dbReference>
<dbReference type="Pfam" id="PF02729">
    <property type="entry name" value="OTCace_N"/>
    <property type="match status" value="1"/>
</dbReference>
<dbReference type="PRINTS" id="PR00100">
    <property type="entry name" value="AOTCASE"/>
</dbReference>
<dbReference type="PRINTS" id="PR00101">
    <property type="entry name" value="ATCASE"/>
</dbReference>
<dbReference type="SUPFAM" id="SSF53671">
    <property type="entry name" value="Aspartate/ornithine carbamoyltransferase"/>
    <property type="match status" value="1"/>
</dbReference>
<dbReference type="PROSITE" id="PS00097">
    <property type="entry name" value="CARBAMOYLTRANSFERASE"/>
    <property type="match status" value="1"/>
</dbReference>